<name>Y551_MYCPN</name>
<proteinExistence type="predicted"/>
<keyword id="KW-1185">Reference proteome</keyword>
<gene>
    <name type="ordered locus">MPN_551</name>
    <name type="ORF">G12_orf281</name>
    <name type="ORF">MP291</name>
</gene>
<protein>
    <recommendedName>
        <fullName>Uncharacterized protein MG373 homolog</fullName>
    </recommendedName>
</protein>
<organism>
    <name type="scientific">Mycoplasma pneumoniae (strain ATCC 29342 / M129 / Subtype 1)</name>
    <name type="common">Mycoplasmoides pneumoniae</name>
    <dbReference type="NCBI Taxonomy" id="272634"/>
    <lineage>
        <taxon>Bacteria</taxon>
        <taxon>Bacillati</taxon>
        <taxon>Mycoplasmatota</taxon>
        <taxon>Mycoplasmoidales</taxon>
        <taxon>Mycoplasmoidaceae</taxon>
        <taxon>Mycoplasmoides</taxon>
    </lineage>
</organism>
<feature type="chain" id="PRO_0000210575" description="Uncharacterized protein MG373 homolog">
    <location>
        <begin position="1"/>
        <end position="281"/>
    </location>
</feature>
<accession>P75227</accession>
<sequence length="281" mass="32569">MGFTKQYKIDFDIIDNQIVLSNNYFQKHKGSFRKITGTRFGKVIGISEYETSLKTWANMVKIYEDEFDETLSRAGQVIEPKIRDYVIAKTGFNFHSYDPKEVKWDLFPENPVFGGIPDGEPVDVYGKLAYDTNAPMLEIKTTSCDSLVYKKINGNLKIVFDENGMPIVKKINGKKDSWFDSNGKIVISPAYYCQIGLYLYLRNITKGMFAIAFLEPQDYVHPEWFEAKQRDIRLVPVQIDRKAFEVLTNKAQLWYNSFIRTGKSPQLTSQDWEWLRENGIA</sequence>
<reference key="1">
    <citation type="journal article" date="1996" name="Nucleic Acids Res.">
        <title>Complete sequence analysis of the genome of the bacterium Mycoplasma pneumoniae.</title>
        <authorList>
            <person name="Himmelreich R."/>
            <person name="Hilbert H."/>
            <person name="Plagens H."/>
            <person name="Pirkl E."/>
            <person name="Li B.-C."/>
            <person name="Herrmann R."/>
        </authorList>
    </citation>
    <scope>NUCLEOTIDE SEQUENCE [LARGE SCALE GENOMIC DNA]</scope>
    <source>
        <strain>ATCC 29342 / M129 / Subtype 1</strain>
    </source>
</reference>
<dbReference type="EMBL" id="U00089">
    <property type="protein sequence ID" value="AAB95939.1"/>
    <property type="molecule type" value="Genomic_DNA"/>
</dbReference>
<dbReference type="PIR" id="S73617">
    <property type="entry name" value="S73617"/>
</dbReference>
<dbReference type="RefSeq" id="NP_110240.1">
    <property type="nucleotide sequence ID" value="NC_000912.1"/>
</dbReference>
<dbReference type="RefSeq" id="WP_010874908.1">
    <property type="nucleotide sequence ID" value="NZ_OU342337.1"/>
</dbReference>
<dbReference type="IntAct" id="P75227">
    <property type="interactions" value="6"/>
</dbReference>
<dbReference type="STRING" id="272634.MPN_551"/>
<dbReference type="EnsemblBacteria" id="AAB95939">
    <property type="protein sequence ID" value="AAB95939"/>
    <property type="gene ID" value="MPN_551"/>
</dbReference>
<dbReference type="KEGG" id="mpn:MPN_551"/>
<dbReference type="PATRIC" id="fig|272634.6.peg.613"/>
<dbReference type="HOGENOM" id="CLU_084220_0_0_14"/>
<dbReference type="OrthoDB" id="403948at2"/>
<dbReference type="BioCyc" id="MPNE272634:G1GJ3-907-MONOMER"/>
<dbReference type="Proteomes" id="UP000000808">
    <property type="component" value="Chromosome"/>
</dbReference>
<dbReference type="Gene3D" id="3.90.320.10">
    <property type="match status" value="1"/>
</dbReference>
<dbReference type="InterPro" id="IPR011604">
    <property type="entry name" value="PDDEXK-like_dom_sf"/>
</dbReference>
<dbReference type="InterPro" id="IPR011335">
    <property type="entry name" value="Restrct_endonuc-II-like"/>
</dbReference>
<dbReference type="InterPro" id="IPR019080">
    <property type="entry name" value="YqaJ_viral_recombinase"/>
</dbReference>
<dbReference type="NCBIfam" id="NF045868">
    <property type="entry name" value="MPN551_DNA_bnd"/>
    <property type="match status" value="1"/>
</dbReference>
<dbReference type="Pfam" id="PF09588">
    <property type="entry name" value="YqaJ"/>
    <property type="match status" value="1"/>
</dbReference>
<dbReference type="SUPFAM" id="SSF52980">
    <property type="entry name" value="Restriction endonuclease-like"/>
    <property type="match status" value="1"/>
</dbReference>